<keyword id="KW-1003">Cell membrane</keyword>
<keyword id="KW-0963">Cytoplasm</keyword>
<keyword id="KW-0206">Cytoskeleton</keyword>
<keyword id="KW-1015">Disulfide bond</keyword>
<keyword id="KW-0325">Glycoprotein</keyword>
<keyword id="KW-0472">Membrane</keyword>
<keyword id="KW-1185">Reference proteome</keyword>
<keyword id="KW-0735">Signal-anchor</keyword>
<keyword id="KW-0812">Transmembrane</keyword>
<keyword id="KW-1133">Transmembrane helix</keyword>
<gene>
    <name type="primary">SGCB</name>
</gene>
<accession>Q60538</accession>
<accession>O08596</accession>
<accession>O09094</accession>
<accession>O09152</accession>
<accession>Q60532</accession>
<evidence type="ECO:0000250" key="1"/>
<evidence type="ECO:0000255" key="2"/>
<evidence type="ECO:0000256" key="3">
    <source>
        <dbReference type="SAM" id="MobiDB-lite"/>
    </source>
</evidence>
<evidence type="ECO:0000305" key="4"/>
<proteinExistence type="evidence at transcript level"/>
<comment type="function">
    <text>Component of the sarcoglycan complex, a subcomplex of the dystrophin-glycoprotein complex which forms a link between the F-actin cytoskeleton and the extracellular matrix.</text>
</comment>
<comment type="subunit">
    <text evidence="1">Cross-link to form 2 major subcomplexes: one consisting of SGCB, SGCD and SGCG and the other consisting of SGCB and SGCD. The association between SGCB and SGCG is particularly strong while SGCA is loosely associated with the other sarcoglycans (By similarity).</text>
</comment>
<comment type="subcellular location">
    <subcellularLocation>
        <location evidence="1">Cell membrane</location>
        <location evidence="1">Sarcolemma</location>
        <topology evidence="1">Single-pass type II membrane protein</topology>
    </subcellularLocation>
    <subcellularLocation>
        <location evidence="1">Cytoplasm</location>
        <location evidence="1">Cytoskeleton</location>
    </subcellularLocation>
</comment>
<comment type="PTM">
    <text evidence="1">Disulfide bonds are present.</text>
</comment>
<comment type="similarity">
    <text evidence="4">Belongs to the sarcoglycan beta/delta/gamma/zeta family.</text>
</comment>
<protein>
    <recommendedName>
        <fullName>Beta-sarcoglycan</fullName>
        <shortName>Beta-SG</shortName>
    </recommendedName>
    <alternativeName>
        <fullName>43 kDa dystrophin-associated glycoprotein</fullName>
        <shortName>43DAG</shortName>
    </alternativeName>
</protein>
<reference key="1">
    <citation type="journal article" date="1997" name="Proc. Natl. Acad. Sci. U.S.A.">
        <title>Both hypertrophic and dilated cardiomyopathies are caused by mutation of the same gene, delta-sarcoglycan, in hamster: an animal model of disrupted dystrophin-associated glycoprotein complex.</title>
        <authorList>
            <person name="Sakamoto A."/>
            <person name="Ono K."/>
            <person name="Abe M."/>
            <person name="Jasmin G."/>
            <person name="Eki T."/>
            <person name="Murakami Y."/>
            <person name="Masaki T."/>
            <person name="Toyo-oka T."/>
            <person name="Hanaoka F."/>
        </authorList>
    </citation>
    <scope>NUCLEOTIDE SEQUENCE [MRNA]</scope>
    <source>
        <strain>Syrian</strain>
        <tissue>Heart muscle</tissue>
    </source>
</reference>
<reference key="2">
    <citation type="journal article" date="1997" name="Biol. Pharm. Bull.">
        <title>mRNA expression and cDNA sequences of beta- and gamma-sarcoglycans are normal in cardiomyopathic hamster heart.</title>
        <authorList>
            <person name="Hanada H."/>
            <person name="Yoshida T."/>
            <person name="Pan Y."/>
            <person name="Iwata Y."/>
            <person name="Nishimura M."/>
            <person name="Shigekawa M."/>
        </authorList>
    </citation>
    <scope>NUCLEOTIDE SEQUENCE [MRNA]</scope>
    <source>
        <strain>ACN(A)</strain>
        <strain>BIO14.6</strain>
        <tissue>Heart ventricle</tissue>
    </source>
</reference>
<reference key="3">
    <citation type="journal article" date="1996" name="N. Engl. J. Med.">
        <title>Deficiency of adhalin in a patient with muscular dystrophy and cardiomyopathy.</title>
        <authorList>
            <person name="McNally E.M."/>
            <person name="Bonnemann C.G."/>
            <person name="Bhattacharya S."/>
            <person name="Kunkel L.M."/>
        </authorList>
    </citation>
    <scope>NUCLEOTIDE SEQUENCE [MRNA]</scope>
</reference>
<sequence>MAAAAAAAAATEQQSSNGPVKKSMREKAVERRNVNKEHNSNFKAGYIPIDEDRLHKTGLRGRKGNLAICVIVLLFILAVINLLITLVIWAVIRIGPNGCDSMEFHESGLLRFKQVSDMGVIHPLYKSTVGGRRNENLVITGNNQPIVFQQGTTKLSVEKNKTSITSDIGMQFFDPRTQNILFSTDYETHEFHLPSGVKSLNVQKASTERITSNATSDLNIKVDGRAIVRGNEGVFIMGKTIEFHMGGNVELKAENSIILNGTVMVSPTRLPSSSSGDQSGGGDWVRYKLCMCADGTLFKVQVTGHNMGCQVADNPCGNTH</sequence>
<name>SGCB_MESAU</name>
<organism>
    <name type="scientific">Mesocricetus auratus</name>
    <name type="common">Golden hamster</name>
    <dbReference type="NCBI Taxonomy" id="10036"/>
    <lineage>
        <taxon>Eukaryota</taxon>
        <taxon>Metazoa</taxon>
        <taxon>Chordata</taxon>
        <taxon>Craniata</taxon>
        <taxon>Vertebrata</taxon>
        <taxon>Euteleostomi</taxon>
        <taxon>Mammalia</taxon>
        <taxon>Eutheria</taxon>
        <taxon>Euarchontoglires</taxon>
        <taxon>Glires</taxon>
        <taxon>Rodentia</taxon>
        <taxon>Myomorpha</taxon>
        <taxon>Muroidea</taxon>
        <taxon>Cricetidae</taxon>
        <taxon>Cricetinae</taxon>
        <taxon>Mesocricetus</taxon>
    </lineage>
</organism>
<dbReference type="EMBL" id="D83652">
    <property type="protein sequence ID" value="BAA12026.1"/>
    <property type="molecule type" value="mRNA"/>
</dbReference>
<dbReference type="EMBL" id="U63894">
    <property type="protein sequence ID" value="AAB52394.1"/>
    <property type="molecule type" value="mRNA"/>
</dbReference>
<dbReference type="EMBL" id="U49791">
    <property type="protein sequence ID" value="AAC52620.1"/>
    <property type="molecule type" value="mRNA"/>
</dbReference>
<dbReference type="PIR" id="JC5540">
    <property type="entry name" value="JC5540"/>
</dbReference>
<dbReference type="RefSeq" id="NP_001268603.1">
    <property type="nucleotide sequence ID" value="NM_001281674.1"/>
</dbReference>
<dbReference type="SMR" id="Q60538"/>
<dbReference type="STRING" id="10036.ENSMAUP00000005073"/>
<dbReference type="GlyCosmos" id="Q60538">
    <property type="glycosylation" value="3 sites, No reported glycans"/>
</dbReference>
<dbReference type="GeneID" id="101831878"/>
<dbReference type="KEGG" id="maua:101831878"/>
<dbReference type="CTD" id="6443"/>
<dbReference type="eggNOG" id="ENOG502QUW4">
    <property type="taxonomic scope" value="Eukaryota"/>
</dbReference>
<dbReference type="OrthoDB" id="5843723at2759"/>
<dbReference type="Proteomes" id="UP000189706">
    <property type="component" value="Unplaced"/>
</dbReference>
<dbReference type="GO" id="GO:0005737">
    <property type="term" value="C:cytoplasm"/>
    <property type="evidence" value="ECO:0007669"/>
    <property type="project" value="UniProtKB-KW"/>
</dbReference>
<dbReference type="GO" id="GO:0005856">
    <property type="term" value="C:cytoskeleton"/>
    <property type="evidence" value="ECO:0007669"/>
    <property type="project" value="UniProtKB-SubCell"/>
</dbReference>
<dbReference type="GO" id="GO:0016012">
    <property type="term" value="C:sarcoglycan complex"/>
    <property type="evidence" value="ECO:0007669"/>
    <property type="project" value="InterPro"/>
</dbReference>
<dbReference type="GO" id="GO:0042383">
    <property type="term" value="C:sarcolemma"/>
    <property type="evidence" value="ECO:0007669"/>
    <property type="project" value="UniProtKB-SubCell"/>
</dbReference>
<dbReference type="GO" id="GO:0007517">
    <property type="term" value="P:muscle organ development"/>
    <property type="evidence" value="ECO:0007669"/>
    <property type="project" value="InterPro"/>
</dbReference>
<dbReference type="InterPro" id="IPR006875">
    <property type="entry name" value="Sarcoglycan"/>
</dbReference>
<dbReference type="InterPro" id="IPR027659">
    <property type="entry name" value="Sgcb"/>
</dbReference>
<dbReference type="PANTHER" id="PTHR21142:SF2">
    <property type="entry name" value="BETA-SARCOGLYCAN"/>
    <property type="match status" value="1"/>
</dbReference>
<dbReference type="PANTHER" id="PTHR21142">
    <property type="entry name" value="SARCOGLYCANS"/>
    <property type="match status" value="1"/>
</dbReference>
<dbReference type="Pfam" id="PF04790">
    <property type="entry name" value="Sarcoglycan_1"/>
    <property type="match status" value="1"/>
</dbReference>
<feature type="chain" id="PRO_0000175243" description="Beta-sarcoglycan">
    <location>
        <begin position="1"/>
        <end position="320"/>
    </location>
</feature>
<feature type="topological domain" description="Cytoplasmic" evidence="2">
    <location>
        <begin position="1"/>
        <end position="67"/>
    </location>
</feature>
<feature type="transmembrane region" description="Helical; Signal-anchor for type II membrane protein" evidence="2">
    <location>
        <begin position="68"/>
        <end position="88"/>
    </location>
</feature>
<feature type="topological domain" description="Extracellular" evidence="2">
    <location>
        <begin position="89"/>
        <end position="320"/>
    </location>
</feature>
<feature type="region of interest" description="Disordered" evidence="3">
    <location>
        <begin position="1"/>
        <end position="34"/>
    </location>
</feature>
<feature type="compositionally biased region" description="Low complexity" evidence="3">
    <location>
        <begin position="1"/>
        <end position="10"/>
    </location>
</feature>
<feature type="compositionally biased region" description="Basic and acidic residues" evidence="3">
    <location>
        <begin position="23"/>
        <end position="34"/>
    </location>
</feature>
<feature type="glycosylation site" description="N-linked (GlcNAc...) asparagine" evidence="2">
    <location>
        <position position="160"/>
    </location>
</feature>
<feature type="glycosylation site" description="N-linked (GlcNAc...) asparagine" evidence="2">
    <location>
        <position position="213"/>
    </location>
</feature>
<feature type="glycosylation site" description="N-linked (GlcNAc...) asparagine" evidence="2">
    <location>
        <position position="260"/>
    </location>
</feature>
<feature type="disulfide bond" evidence="2">
    <location>
        <begin position="290"/>
        <end position="316"/>
    </location>
</feature>
<feature type="disulfide bond" evidence="2">
    <location>
        <begin position="292"/>
        <end position="309"/>
    </location>
</feature>
<feature type="sequence conflict" description="In Ref. 2 and 3." evidence="4" ref="2 3">
    <original>S</original>
    <variation>L</variation>
    <location>
        <position position="279"/>
    </location>
</feature>